<feature type="chain" id="PRO_0000073445" description="Alpha-actinin A">
    <location>
        <begin position="1"/>
        <end position="861"/>
    </location>
</feature>
<feature type="domain" description="Calponin-homology (CH) 1" evidence="1">
    <location>
        <begin position="22"/>
        <end position="127"/>
    </location>
</feature>
<feature type="domain" description="Calponin-homology (CH) 2" evidence="1">
    <location>
        <begin position="136"/>
        <end position="242"/>
    </location>
</feature>
<feature type="repeat" description="Spectrin 1">
    <location>
        <begin position="240"/>
        <end position="365"/>
    </location>
</feature>
<feature type="repeat" description="Spectrin 2">
    <location>
        <begin position="366"/>
        <end position="480"/>
    </location>
</feature>
<feature type="repeat" description="Spectrin 3">
    <location>
        <begin position="481"/>
        <end position="601"/>
    </location>
</feature>
<feature type="repeat" description="Spectrin 4">
    <location>
        <begin position="602"/>
        <end position="714"/>
    </location>
</feature>
<feature type="domain" description="EF-hand 1" evidence="2">
    <location>
        <begin position="729"/>
        <end position="764"/>
    </location>
</feature>
<feature type="domain" description="EF-hand 2" evidence="2">
    <location>
        <begin position="765"/>
        <end position="800"/>
    </location>
</feature>
<feature type="region of interest" description="Actin-binding">
    <location>
        <begin position="1"/>
        <end position="239"/>
    </location>
</feature>
<feature type="binding site" evidence="2">
    <location>
        <position position="742"/>
    </location>
    <ligand>
        <name>Ca(2+)</name>
        <dbReference type="ChEBI" id="CHEBI:29108"/>
        <label>1</label>
    </ligand>
</feature>
<feature type="binding site" evidence="2">
    <location>
        <position position="744"/>
    </location>
    <ligand>
        <name>Ca(2+)</name>
        <dbReference type="ChEBI" id="CHEBI:29108"/>
        <label>1</label>
    </ligand>
</feature>
<feature type="binding site" evidence="2">
    <location>
        <position position="746"/>
    </location>
    <ligand>
        <name>Ca(2+)</name>
        <dbReference type="ChEBI" id="CHEBI:29108"/>
        <label>1</label>
    </ligand>
</feature>
<feature type="binding site" evidence="2">
    <location>
        <position position="748"/>
    </location>
    <ligand>
        <name>Ca(2+)</name>
        <dbReference type="ChEBI" id="CHEBI:29108"/>
        <label>1</label>
    </ligand>
</feature>
<feature type="binding site" evidence="2">
    <location>
        <position position="753"/>
    </location>
    <ligand>
        <name>Ca(2+)</name>
        <dbReference type="ChEBI" id="CHEBI:29108"/>
        <label>1</label>
    </ligand>
</feature>
<feature type="binding site" evidence="2">
    <location>
        <position position="778"/>
    </location>
    <ligand>
        <name>Ca(2+)</name>
        <dbReference type="ChEBI" id="CHEBI:29108"/>
        <label>2</label>
    </ligand>
</feature>
<feature type="binding site" evidence="2">
    <location>
        <position position="780"/>
    </location>
    <ligand>
        <name>Ca(2+)</name>
        <dbReference type="ChEBI" id="CHEBI:29108"/>
        <label>2</label>
    </ligand>
</feature>
<feature type="binding site" evidence="2">
    <location>
        <position position="782"/>
    </location>
    <ligand>
        <name>Ca(2+)</name>
        <dbReference type="ChEBI" id="CHEBI:29108"/>
        <label>2</label>
    </ligand>
</feature>
<feature type="binding site" evidence="2">
    <location>
        <position position="784"/>
    </location>
    <ligand>
        <name>Ca(2+)</name>
        <dbReference type="ChEBI" id="CHEBI:29108"/>
        <label>2</label>
    </ligand>
</feature>
<feature type="binding site" evidence="2">
    <location>
        <position position="789"/>
    </location>
    <ligand>
        <name>Ca(2+)</name>
        <dbReference type="ChEBI" id="CHEBI:29108"/>
        <label>2</label>
    </ligand>
</feature>
<feature type="mutagenesis site" description="Abolishes cross-linking activity and reduces calcium binding by 55%; when associated with A-744; A-746 and A-753." evidence="11">
    <original>D</original>
    <variation>A</variation>
    <location>
        <position position="742"/>
    </location>
</feature>
<feature type="mutagenesis site" description="Abolishes cross-linking activity and reduces calcium binding by 55%; when associated with A-742; A-746 and A-753." evidence="11">
    <original>D</original>
    <variation>A</variation>
    <location>
        <position position="744"/>
    </location>
</feature>
<feature type="mutagenesis site" description="Abolishes cross-linking activity and reduces calcium binding by 55%; when associated with A-742; A-744 and A-753." evidence="11">
    <original>D</original>
    <variation>A</variation>
    <location>
        <position position="746"/>
    </location>
</feature>
<feature type="mutagenesis site" description="Abolishes cross-linking activity and reduces calcium binding by 55%; when associated with A-742; A-744 and A-746." evidence="11">
    <original>E</original>
    <variation>A</variation>
    <location>
        <position position="753"/>
    </location>
</feature>
<feature type="mutagenesis site" description="Decreases sensitivity to inhibition by calcium; when associated with A-780; A-786 and A-789." evidence="11">
    <original>D</original>
    <variation>A</variation>
    <location>
        <position position="778"/>
    </location>
</feature>
<feature type="mutagenesis site" description="Decreases sensitivity to inhibition by calcium; when associated with A-778; A-786 and A-789." evidence="11">
    <original>D</original>
    <variation>A</variation>
    <location>
        <position position="780"/>
    </location>
</feature>
<feature type="mutagenesis site" description="Decreases sensitivity to inhibition by calcium; when associated with A-778; A-780 and A-789." evidence="11">
    <original>S</original>
    <variation>A</variation>
    <location>
        <position position="786"/>
    </location>
</feature>
<feature type="mutagenesis site" description="Decreases sensitivity to inhibition by calcium; when associated with A-778; A-780 and A-786." evidence="11">
    <original>E</original>
    <variation>A</variation>
    <location>
        <position position="789"/>
    </location>
</feature>
<feature type="sequence conflict" description="In Ref. 1; CAA68685." evidence="13" ref="1">
    <original>R</original>
    <variation>RR</variation>
    <location>
        <position position="78"/>
    </location>
</feature>
<feature type="sequence conflict" description="In Ref. 3; CAA27855." evidence="13" ref="3">
    <original>T</original>
    <variation>P</variation>
    <location>
        <position position="359"/>
    </location>
</feature>
<feature type="sequence conflict" description="In Ref. 3; CAA27855." evidence="13" ref="3">
    <original>I</original>
    <variation>T</variation>
    <location>
        <position position="500"/>
    </location>
</feature>
<feature type="sequence conflict" description="In Ref. 1; CAA68685." evidence="13" ref="1">
    <original>A</original>
    <variation>R</variation>
    <location>
        <position position="675"/>
    </location>
</feature>
<feature type="sequence conflict" description="In Ref. 1; CAA68685." evidence="13" ref="1">
    <original>I</original>
    <variation>L</variation>
    <location>
        <position position="696"/>
    </location>
</feature>
<feature type="helix" evidence="16">
    <location>
        <begin position="265"/>
        <end position="289"/>
    </location>
</feature>
<feature type="helix" evidence="16">
    <location>
        <begin position="298"/>
        <end position="314"/>
    </location>
</feature>
<feature type="helix" evidence="16">
    <location>
        <begin position="316"/>
        <end position="336"/>
    </location>
</feature>
<feature type="turn" evidence="14">
    <location>
        <begin position="339"/>
        <end position="341"/>
    </location>
</feature>
<feature type="strand" evidence="15">
    <location>
        <begin position="348"/>
        <end position="350"/>
    </location>
</feature>
<feature type="helix" evidence="16">
    <location>
        <begin position="353"/>
        <end position="404"/>
    </location>
</feature>
<feature type="helix" evidence="16">
    <location>
        <begin position="405"/>
        <end position="409"/>
    </location>
</feature>
<feature type="turn" evidence="16">
    <location>
        <begin position="415"/>
        <end position="417"/>
    </location>
</feature>
<feature type="helix" evidence="16">
    <location>
        <begin position="418"/>
        <end position="427"/>
    </location>
</feature>
<feature type="helix" evidence="16">
    <location>
        <begin position="428"/>
        <end position="431"/>
    </location>
</feature>
<feature type="helix" evidence="16">
    <location>
        <begin position="432"/>
        <end position="450"/>
    </location>
</feature>
<feature type="turn" evidence="16">
    <location>
        <begin position="456"/>
        <end position="459"/>
    </location>
</feature>
<feature type="helix" evidence="16">
    <location>
        <begin position="460"/>
        <end position="483"/>
    </location>
</feature>
<feature type="helix" evidence="14">
    <location>
        <begin position="484"/>
        <end position="487"/>
    </location>
</feature>
<feature type="turn" evidence="14">
    <location>
        <begin position="489"/>
        <end position="494"/>
    </location>
</feature>
<feature type="turn" evidence="14">
    <location>
        <begin position="496"/>
        <end position="501"/>
    </location>
</feature>
<evidence type="ECO:0000255" key="1">
    <source>
        <dbReference type="PROSITE-ProRule" id="PRU00044"/>
    </source>
</evidence>
<evidence type="ECO:0000255" key="2">
    <source>
        <dbReference type="PROSITE-ProRule" id="PRU00448"/>
    </source>
</evidence>
<evidence type="ECO:0000269" key="3">
    <source>
    </source>
</evidence>
<evidence type="ECO:0000269" key="4">
    <source>
    </source>
</evidence>
<evidence type="ECO:0000269" key="5">
    <source>
    </source>
</evidence>
<evidence type="ECO:0000269" key="6">
    <source>
    </source>
</evidence>
<evidence type="ECO:0000269" key="7">
    <source>
    </source>
</evidence>
<evidence type="ECO:0000269" key="8">
    <source>
    </source>
</evidence>
<evidence type="ECO:0000269" key="9">
    <source>
    </source>
</evidence>
<evidence type="ECO:0000269" key="10">
    <source>
    </source>
</evidence>
<evidence type="ECO:0000269" key="11">
    <source>
    </source>
</evidence>
<evidence type="ECO:0000269" key="12">
    <source>
    </source>
</evidence>
<evidence type="ECO:0000305" key="13"/>
<evidence type="ECO:0007829" key="14">
    <source>
        <dbReference type="PDB" id="1G8X"/>
    </source>
</evidence>
<evidence type="ECO:0007829" key="15">
    <source>
        <dbReference type="PDB" id="4PD3"/>
    </source>
</evidence>
<evidence type="ECO:0007829" key="16">
    <source>
        <dbReference type="PDB" id="5I4E"/>
    </source>
</evidence>
<gene>
    <name type="primary">abpA</name>
    <name type="synonym">actnA</name>
    <name type="ORF">DDB_G0268632</name>
</gene>
<keyword id="KW-0002">3D-structure</keyword>
<keyword id="KW-0009">Actin-binding</keyword>
<keyword id="KW-0106">Calcium</keyword>
<keyword id="KW-0963">Cytoplasm</keyword>
<keyword id="KW-0968">Cytoplasmic vesicle</keyword>
<keyword id="KW-0217">Developmental protein</keyword>
<keyword id="KW-0903">Direct protein sequencing</keyword>
<keyword id="KW-0479">Metal-binding</keyword>
<keyword id="KW-1185">Reference proteome</keyword>
<keyword id="KW-0677">Repeat</keyword>
<keyword id="KW-0926">Vacuole</keyword>
<comment type="function">
    <text evidence="3 4 5 6 8 9 11 12">F-actin cross-linking protein which is thought to anchor actin to a variety of intracellular structures. This is a bundling protein. Increases the actin-stimulated ATPase activity of myosin. Involved in vegetative cell growth, phagocytosis, motility and development, probably through stabilization of the actin network in the cortical cytoskeleton.</text>
</comment>
<comment type="subunit">
    <text evidence="8">Homodimer; antiparallel.</text>
</comment>
<comment type="subcellular location">
    <subcellularLocation>
        <location evidence="10">Cytoplasm</location>
    </subcellularLocation>
    <subcellularLocation>
        <location evidence="10">Cytoplasm</location>
        <location evidence="10">Cell cortex</location>
    </subcellularLocation>
    <subcellularLocation>
        <location evidence="10">Contractile vacuole</location>
    </subcellularLocation>
    <subcellularLocation>
        <location evidence="10">Cytoplasmic vesicle</location>
        <location evidence="10">Phagosome</location>
    </subcellularLocation>
    <text>Expressed diffusely throughout the cytoplasm. Accumulates in the cell cortex, contractile vesicle and phagosome.</text>
</comment>
<comment type="developmental stage">
    <text evidence="7">Expressed throughout development. Levels increase during aggregation (1-6 hours) and are then maintained until late culmination when they start to decrease.</text>
</comment>
<comment type="disruption phenotype">
    <text evidence="3 4 5 6 8 12">Cells show a minor impairment of growth under conditions of reduced temperature and hyperosmotic stress. Fruiting body development and spore production on soil plates is strongly impaired in mutants lacking abpA, but is only mildly affected in mutants on agar plates. Double mutants lacking both abpA and abpC show a marked reduction in growth, cell size and resistance to osmotic shock, and decreased motility and phagocytosis rates. Development is blocked at the tip stage of aggregation, although expression of developmentally regulated genes does not appear to be affected. Double mutants lacking abpA and abpB show a significant reduction in growth and a slight reduction in motility. Development appears to proceed normally until culmination when aberrant fruiting bodies are formed. The phenotypes of the double mutants suggests a partial redundancy in the microfilament system.</text>
</comment>
<comment type="similarity">
    <text evidence="13">Belongs to the alpha-actinin family.</text>
</comment>
<reference key="1">
    <citation type="journal article" date="1987" name="FEBS Lett.">
        <title>Calcium-sensitive non-muscle alpha-actinin contains EF-hand structures and highly conserved regions.</title>
        <authorList>
            <person name="Noegel A."/>
            <person name="Witke W."/>
            <person name="Schleicher M."/>
        </authorList>
    </citation>
    <scope>NUCLEOTIDE SEQUENCE [MRNA]</scope>
    <source>
        <strain>AX2</strain>
    </source>
</reference>
<reference key="2">
    <citation type="journal article" date="2005" name="Nature">
        <title>The genome of the social amoeba Dictyostelium discoideum.</title>
        <authorList>
            <person name="Eichinger L."/>
            <person name="Pachebat J.A."/>
            <person name="Gloeckner G."/>
            <person name="Rajandream M.A."/>
            <person name="Sucgang R."/>
            <person name="Berriman M."/>
            <person name="Song J."/>
            <person name="Olsen R."/>
            <person name="Szafranski K."/>
            <person name="Xu Q."/>
            <person name="Tunggal B."/>
            <person name="Kummerfeld S."/>
            <person name="Madera M."/>
            <person name="Konfortov B.A."/>
            <person name="Rivero F."/>
            <person name="Bankier A.T."/>
            <person name="Lehmann R."/>
            <person name="Hamlin N."/>
            <person name="Davies R."/>
            <person name="Gaudet P."/>
            <person name="Fey P."/>
            <person name="Pilcher K."/>
            <person name="Chen G."/>
            <person name="Saunders D."/>
            <person name="Sodergren E.J."/>
            <person name="Davis P."/>
            <person name="Kerhornou A."/>
            <person name="Nie X."/>
            <person name="Hall N."/>
            <person name="Anjard C."/>
            <person name="Hemphill L."/>
            <person name="Bason N."/>
            <person name="Farbrother P."/>
            <person name="Desany B."/>
            <person name="Just E."/>
            <person name="Morio T."/>
            <person name="Rost R."/>
            <person name="Churcher C.M."/>
            <person name="Cooper J."/>
            <person name="Haydock S."/>
            <person name="van Driessche N."/>
            <person name="Cronin A."/>
            <person name="Goodhead I."/>
            <person name="Muzny D.M."/>
            <person name="Mourier T."/>
            <person name="Pain A."/>
            <person name="Lu M."/>
            <person name="Harper D."/>
            <person name="Lindsay R."/>
            <person name="Hauser H."/>
            <person name="James K.D."/>
            <person name="Quiles M."/>
            <person name="Madan Babu M."/>
            <person name="Saito T."/>
            <person name="Buchrieser C."/>
            <person name="Wardroper A."/>
            <person name="Felder M."/>
            <person name="Thangavelu M."/>
            <person name="Johnson D."/>
            <person name="Knights A."/>
            <person name="Loulseged H."/>
            <person name="Mungall K.L."/>
            <person name="Oliver K."/>
            <person name="Price C."/>
            <person name="Quail M.A."/>
            <person name="Urushihara H."/>
            <person name="Hernandez J."/>
            <person name="Rabbinowitsch E."/>
            <person name="Steffen D."/>
            <person name="Sanders M."/>
            <person name="Ma J."/>
            <person name="Kohara Y."/>
            <person name="Sharp S."/>
            <person name="Simmonds M.N."/>
            <person name="Spiegler S."/>
            <person name="Tivey A."/>
            <person name="Sugano S."/>
            <person name="White B."/>
            <person name="Walker D."/>
            <person name="Woodward J.R."/>
            <person name="Winckler T."/>
            <person name="Tanaka Y."/>
            <person name="Shaulsky G."/>
            <person name="Schleicher M."/>
            <person name="Weinstock G.M."/>
            <person name="Rosenthal A."/>
            <person name="Cox E.C."/>
            <person name="Chisholm R.L."/>
            <person name="Gibbs R.A."/>
            <person name="Loomis W.F."/>
            <person name="Platzer M."/>
            <person name="Kay R.R."/>
            <person name="Williams J.G."/>
            <person name="Dear P.H."/>
            <person name="Noegel A.A."/>
            <person name="Barrell B.G."/>
            <person name="Kuspa A."/>
        </authorList>
    </citation>
    <scope>NUCLEOTIDE SEQUENCE [LARGE SCALE GENOMIC DNA]</scope>
    <source>
        <strain>AX4</strain>
    </source>
</reference>
<reference key="3">
    <citation type="journal article" date="1986" name="J. Cell Biol.">
        <title>Studies on the transcription, translation, and structure of alpha-actinin in Dictyostelium discoideum.</title>
        <authorList>
            <person name="Witke W."/>
            <person name="Schleicher M."/>
            <person name="Lottspeich F."/>
            <person name="Noegel A."/>
        </authorList>
    </citation>
    <scope>NUCLEOTIDE SEQUENCE [GENOMIC DNA] OF 91-504</scope>
    <scope>PROTEIN SEQUENCE OF 126-139; 275-285; 293-309; 313-328; 397-405 AND 481-487</scope>
    <scope>DEVELOPMENTAL STAGE</scope>
    <source>
        <strain>AX2</strain>
    </source>
</reference>
<reference key="4">
    <citation type="journal article" date="1984" name="J. Cell Biol.">
        <title>Properties of the 120,000- and 95,000-dalton actin-binding proteins from Dictyostelium discoideum and their possible functions in assembling the cytoplasmic matrix.</title>
        <authorList>
            <person name="Condeelis J."/>
            <person name="Vahey M."/>
            <person name="Carboni J.M."/>
            <person name="DeMey J."/>
            <person name="Ogihara S."/>
        </authorList>
    </citation>
    <scope>FUNCTION</scope>
</reference>
<reference key="5">
    <citation type="journal article" date="1986" name="EMBO J.">
        <title>Selection of Dictyostelium mutants defective in cytoskeletal proteins: use of an antibody that binds to the ends of alpha-actinin rods.</title>
        <authorList>
            <person name="Wallraff E."/>
            <person name="Schleicher M."/>
            <person name="Modersitzki M."/>
            <person name="Rieger D."/>
            <person name="Isenberg G."/>
            <person name="Gerisch G."/>
        </authorList>
    </citation>
    <scope>FUNCTION</scope>
    <scope>SUBUNIT</scope>
    <scope>DISRUPTION PHENOTYPE</scope>
</reference>
<reference key="6">
    <citation type="journal article" date="1992" name="Cell">
        <title>Redundancy in the microfilament system: abnormal development of Dictyostelium cells lacking two F-actin cross-linking proteins.</title>
        <authorList>
            <person name="Witke W."/>
            <person name="Schleicher M."/>
            <person name="Noegel A.A."/>
        </authorList>
    </citation>
    <scope>FUNCTION</scope>
    <scope>DISRUPTION PHENOTYPE</scope>
</reference>
<reference key="7">
    <citation type="journal article" date="1993" name="J. Cell Biol.">
        <title>The Ca(2+)-binding domains in non-muscle type alpha-actinin: biochemical and genetic analysis.</title>
        <authorList>
            <person name="Witke W."/>
            <person name="Hofmann A."/>
            <person name="Koeppel B."/>
            <person name="Schleicher M."/>
            <person name="Noegel A.A."/>
        </authorList>
    </citation>
    <scope>FUNCTION</scope>
    <scope>MUTAGENESIS OF ASP-742; ASP-744; ASP-746; GLU-753; ASP-778; ASP-780; SER-786 AND GLU-789</scope>
</reference>
<reference key="8">
    <citation type="journal article" date="1994" name="Cell Motil. Cytoskeleton">
        <title>Differential localization of alpha-actinin and the 30 kD actin-bundling protein in the cleavage furrow, phagocytic cup, and contractile vacuole of Dictyostelium discoideum.</title>
        <authorList>
            <person name="Furukawa R."/>
            <person name="Fechheimer M."/>
        </authorList>
    </citation>
    <scope>SUBCELLULAR LOCATION</scope>
</reference>
<reference key="9">
    <citation type="journal article" date="1996" name="J. Cell Sci.">
        <title>The role of the cortical cytoskeleton: F-actin crosslinking proteins protect against osmotic stress, ensure cell size, cell shape and motility, and contribute to phagocytosis and development.</title>
        <authorList>
            <person name="Rivero F."/>
            <person name="Koeppel B."/>
            <person name="Peracino B."/>
            <person name="Bozzaro S."/>
            <person name="Siegert F."/>
            <person name="Weijer C.J."/>
            <person name="Schleicher M."/>
            <person name="Albrecht R."/>
            <person name="Noegel A.A."/>
        </authorList>
    </citation>
    <scope>FUNCTION</scope>
    <scope>DISRUPTION PHENOTYPE</scope>
</reference>
<reference key="10">
    <citation type="journal article" date="1999" name="Croat. Med. J.">
        <title>Computer-assisted morphometry of cell-substratum contacts.</title>
        <authorList>
            <person name="Weber I."/>
        </authorList>
    </citation>
    <scope>FUNCTION</scope>
    <scope>DISRUPTION PHENOTYPE</scope>
</reference>
<reference key="11">
    <citation type="journal article" date="1999" name="J. Cell Sci.">
        <title>Three actin cross-linking proteins, the 34 kDa actin-bundling protein, alpha-actinin and gelation factor (ABP-120), have both unique and redundant roles in the growth and development of Dictyostelium.</title>
        <authorList>
            <person name="Rivero F."/>
            <person name="Furukawa R."/>
            <person name="Fechheimer M."/>
            <person name="Noegel A.A."/>
        </authorList>
    </citation>
    <scope>FUNCTION</scope>
    <scope>DISRUPTION PHENOTYPE</scope>
</reference>
<reference key="12">
    <citation type="journal article" date="2000" name="Mech. Dev.">
        <title>Severe developmental defects in Dictyostelium null mutants for actin-binding proteins.</title>
        <authorList>
            <person name="Ponte E."/>
            <person name="Rivero F."/>
            <person name="Fechheimer M."/>
            <person name="Noegel A."/>
            <person name="Bozzaro S."/>
        </authorList>
    </citation>
    <scope>FUNCTION</scope>
    <scope>DISRUPTION PHENOTYPE</scope>
</reference>
<reference key="13">
    <citation type="journal article" date="2001" name="EMBO J.">
        <title>Structure of a genetically engineered molecular motor.</title>
        <authorList>
            <person name="Kliche W."/>
            <person name="Fujita-Becker S."/>
            <person name="Kollmar M."/>
            <person name="Manstein D.J."/>
            <person name="Kull F.J."/>
        </authorList>
    </citation>
    <scope>X-RAY CRYSTALLOGRAPHY (2.8 ANGSTROMS) OF 265-502</scope>
</reference>
<sequence>MSEEPTPVSGNDKQLLNKAWEITQKKTFTAWCNSHLRKLGSSIEQIDTDFTDGIKLAQLLEVISNDPVFKVNKTPKLRIHNIQNVGLCLKHIESHGVKLVGIGAEELVDKNLKMTLGMIWTIILRFAIQDISIEELSAKEALLLWCQRKTEGYDRVKVGNFHTSFQDGLAFCALIHKHRPDLINFDSLNKDDKAGNLQLAFDIAEKELDIPKMLDVSDMLDVVRPDERSVMTYVAQYYHHFSASRKAETAGKQVGKVLDTFMLLEQTKSDYLKRANELVQWINDKQASLESRDFGDSIESVQSFMNAHKEYKKTEKPPKGQEVSELEAIYNSLQTKLRLIKREPFVAPAGLTPNEIDSTWSALEKAEQEHAEALRIELKRQKKIAVLLQKYNRILKKLENWATTKSVYLGSNETGDSITAVQAKLKNLEAFDGECQSLEGQSNSDLLSILAQLTELNYNGVPELTERKDTFFAQQWTGVKSSAETYKNTLLAELERLQKIEDSLVEFAKRAAQLNVWIEAADDHVFDPINVDSVQGVQEIQEKFDAFLHDQSQQFAELEALAALTQQLRELGRSENDYSVISYDELSAKWNNLLAGIEERKVQLANELTTQTNNDVLCQSFSVKANEISDYVRVTLDAISQNTSSDPQEQLNNIRAIITAHAEKKPELDELYTIASQLEEAQVVDNKHTQHSLESIKLKWDKLNTLAKKNEQVVEGEILAKQLTGVTAEELSEFKACFSHFDKDNDNKLNRLEFSSCLKSIGDELTEEQLNQVISKIDTDGNGTISFEEFIDYMVSSRKGTDSVESTKAAFKVMAEDKDFITEAQIRAAISDSKQIDYLLASMPAVEGGFDYNSFAEKLYQ</sequence>
<name>ACTNA_DICDI</name>
<accession>P05095</accession>
<accession>Q55EP1</accession>
<organism>
    <name type="scientific">Dictyostelium discoideum</name>
    <name type="common">Social amoeba</name>
    <dbReference type="NCBI Taxonomy" id="44689"/>
    <lineage>
        <taxon>Eukaryota</taxon>
        <taxon>Amoebozoa</taxon>
        <taxon>Evosea</taxon>
        <taxon>Eumycetozoa</taxon>
        <taxon>Dictyostelia</taxon>
        <taxon>Dictyosteliales</taxon>
        <taxon>Dictyosteliaceae</taxon>
        <taxon>Dictyostelium</taxon>
    </lineage>
</organism>
<dbReference type="EMBL" id="Y00689">
    <property type="protein sequence ID" value="CAA68685.1"/>
    <property type="molecule type" value="mRNA"/>
</dbReference>
<dbReference type="EMBL" id="AAFI02000004">
    <property type="protein sequence ID" value="EAL72905.1"/>
    <property type="molecule type" value="Genomic_DNA"/>
</dbReference>
<dbReference type="EMBL" id="X04324">
    <property type="protein sequence ID" value="CAA27855.1"/>
    <property type="molecule type" value="Genomic_DNA"/>
</dbReference>
<dbReference type="PIR" id="S00103">
    <property type="entry name" value="FADOAA"/>
</dbReference>
<dbReference type="RefSeq" id="XP_646979.1">
    <property type="nucleotide sequence ID" value="XM_641887.1"/>
</dbReference>
<dbReference type="PDB" id="1G8X">
    <property type="method" value="X-ray"/>
    <property type="resolution" value="2.80 A"/>
    <property type="chains" value="A/B=265-502"/>
</dbReference>
<dbReference type="PDB" id="4PD3">
    <property type="method" value="X-ray"/>
    <property type="resolution" value="2.84 A"/>
    <property type="chains" value="A/B=265-502"/>
</dbReference>
<dbReference type="PDB" id="5I4E">
    <property type="method" value="X-ray"/>
    <property type="resolution" value="2.25 A"/>
    <property type="chains" value="A=265-489"/>
</dbReference>
<dbReference type="PDB" id="5JLH">
    <property type="method" value="EM"/>
    <property type="resolution" value="3.90 A"/>
    <property type="chains" value="F/G=265-502"/>
</dbReference>
<dbReference type="PDBsum" id="1G8X"/>
<dbReference type="PDBsum" id="4PD3"/>
<dbReference type="PDBsum" id="5I4E"/>
<dbReference type="PDBsum" id="5JLH"/>
<dbReference type="EMDB" id="EMD-8164"/>
<dbReference type="SMR" id="P05095"/>
<dbReference type="FunCoup" id="P05095">
    <property type="interactions" value="45"/>
</dbReference>
<dbReference type="STRING" id="44689.P05095"/>
<dbReference type="GlyGen" id="P05095">
    <property type="glycosylation" value="1 site"/>
</dbReference>
<dbReference type="PaxDb" id="44689-DDB0191133"/>
<dbReference type="EnsemblProtists" id="EAL72905">
    <property type="protein sequence ID" value="EAL72905"/>
    <property type="gene ID" value="DDB_G0268632"/>
</dbReference>
<dbReference type="GeneID" id="8616670"/>
<dbReference type="KEGG" id="ddi:DDB_G0268632"/>
<dbReference type="dictyBase" id="DDB_G0268632">
    <property type="gene designation" value="abpA"/>
</dbReference>
<dbReference type="VEuPathDB" id="AmoebaDB:DDB_G0268632"/>
<dbReference type="eggNOG" id="KOG0035">
    <property type="taxonomic scope" value="Eukaryota"/>
</dbReference>
<dbReference type="HOGENOM" id="CLU_005217_0_2_1"/>
<dbReference type="InParanoid" id="P05095"/>
<dbReference type="OMA" id="IMILVDP"/>
<dbReference type="PhylomeDB" id="P05095"/>
<dbReference type="Reactome" id="R-DDI-114608">
    <property type="pathway name" value="Platelet degranulation"/>
</dbReference>
<dbReference type="Reactome" id="R-DDI-6798695">
    <property type="pathway name" value="Neutrophil degranulation"/>
</dbReference>
<dbReference type="Reactome" id="R-DDI-6807878">
    <property type="pathway name" value="COPI-mediated anterograde transport"/>
</dbReference>
<dbReference type="Reactome" id="R-DDI-9013418">
    <property type="pathway name" value="RHOBTB2 GTPase cycle"/>
</dbReference>
<dbReference type="Reactome" id="R-DDI-9013420">
    <property type="pathway name" value="RHOU GTPase cycle"/>
</dbReference>
<dbReference type="Reactome" id="R-DDI-9013424">
    <property type="pathway name" value="RHOV GTPase cycle"/>
</dbReference>
<dbReference type="EvolutionaryTrace" id="P05095"/>
<dbReference type="PRO" id="PR:P05095"/>
<dbReference type="Proteomes" id="UP000002195">
    <property type="component" value="Chromosome 1"/>
</dbReference>
<dbReference type="GO" id="GO:0005884">
    <property type="term" value="C:actin filament"/>
    <property type="evidence" value="ECO:0000314"/>
    <property type="project" value="dictyBase"/>
</dbReference>
<dbReference type="GO" id="GO:0005938">
    <property type="term" value="C:cell cortex"/>
    <property type="evidence" value="ECO:0000314"/>
    <property type="project" value="dictyBase"/>
</dbReference>
<dbReference type="GO" id="GO:0031252">
    <property type="term" value="C:cell leading edge"/>
    <property type="evidence" value="ECO:0000314"/>
    <property type="project" value="dictyBase"/>
</dbReference>
<dbReference type="GO" id="GO:0042995">
    <property type="term" value="C:cell projection"/>
    <property type="evidence" value="ECO:0000318"/>
    <property type="project" value="GO_Central"/>
</dbReference>
<dbReference type="GO" id="GO:0000331">
    <property type="term" value="C:contractile vacuole"/>
    <property type="evidence" value="ECO:0007669"/>
    <property type="project" value="UniProtKB-SubCell"/>
</dbReference>
<dbReference type="GO" id="GO:0030864">
    <property type="term" value="C:cortical actin cytoskeleton"/>
    <property type="evidence" value="ECO:0000318"/>
    <property type="project" value="GO_Central"/>
</dbReference>
<dbReference type="GO" id="GO:0005829">
    <property type="term" value="C:cytosol"/>
    <property type="evidence" value="ECO:0000314"/>
    <property type="project" value="dictyBase"/>
</dbReference>
<dbReference type="GO" id="GO:0031012">
    <property type="term" value="C:extracellular matrix"/>
    <property type="evidence" value="ECO:0000314"/>
    <property type="project" value="dictyBase"/>
</dbReference>
<dbReference type="GO" id="GO:0070685">
    <property type="term" value="C:macropinocytic cup"/>
    <property type="evidence" value="ECO:0000314"/>
    <property type="project" value="dictyBase"/>
</dbReference>
<dbReference type="GO" id="GO:0045335">
    <property type="term" value="C:phagocytic vesicle"/>
    <property type="evidence" value="ECO:0007669"/>
    <property type="project" value="UniProtKB-SubCell"/>
</dbReference>
<dbReference type="GO" id="GO:0031143">
    <property type="term" value="C:pseudopodium"/>
    <property type="evidence" value="ECO:0000314"/>
    <property type="project" value="dictyBase"/>
</dbReference>
<dbReference type="GO" id="GO:0051015">
    <property type="term" value="F:actin filament binding"/>
    <property type="evidence" value="ECO:0000314"/>
    <property type="project" value="dictyBase"/>
</dbReference>
<dbReference type="GO" id="GO:0005509">
    <property type="term" value="F:calcium ion binding"/>
    <property type="evidence" value="ECO:0000314"/>
    <property type="project" value="dictyBase"/>
</dbReference>
<dbReference type="GO" id="GO:0030674">
    <property type="term" value="F:protein-macromolecule adaptor activity"/>
    <property type="evidence" value="ECO:0000314"/>
    <property type="project" value="dictyBase"/>
</dbReference>
<dbReference type="GO" id="GO:0005200">
    <property type="term" value="F:structural constituent of cytoskeleton"/>
    <property type="evidence" value="ECO:0000314"/>
    <property type="project" value="dictyBase"/>
</dbReference>
<dbReference type="GO" id="GO:0051764">
    <property type="term" value="P:actin crosslink formation"/>
    <property type="evidence" value="ECO:0000314"/>
    <property type="project" value="UniProtKB"/>
</dbReference>
<dbReference type="GO" id="GO:0030036">
    <property type="term" value="P:actin cytoskeleton organization"/>
    <property type="evidence" value="ECO:0000318"/>
    <property type="project" value="GO_Central"/>
</dbReference>
<dbReference type="GO" id="GO:0051017">
    <property type="term" value="P:actin filament bundle assembly"/>
    <property type="evidence" value="ECO:0000314"/>
    <property type="project" value="dictyBase"/>
</dbReference>
<dbReference type="GO" id="GO:0048870">
    <property type="term" value="P:cell motility"/>
    <property type="evidence" value="ECO:0000316"/>
    <property type="project" value="dictyBase"/>
</dbReference>
<dbReference type="GO" id="GO:0009267">
    <property type="term" value="P:cellular response to starvation"/>
    <property type="evidence" value="ECO:0000270"/>
    <property type="project" value="dictyBase"/>
</dbReference>
<dbReference type="GO" id="GO:0006972">
    <property type="term" value="P:hyperosmotic response"/>
    <property type="evidence" value="ECO:0000316"/>
    <property type="project" value="dictyBase"/>
</dbReference>
<dbReference type="GO" id="GO:0006909">
    <property type="term" value="P:phagocytosis"/>
    <property type="evidence" value="ECO:0000316"/>
    <property type="project" value="dictyBase"/>
</dbReference>
<dbReference type="GO" id="GO:0030587">
    <property type="term" value="P:sorocarp development"/>
    <property type="evidence" value="ECO:0000316"/>
    <property type="project" value="dictyBase"/>
</dbReference>
<dbReference type="CDD" id="cd21214">
    <property type="entry name" value="CH_ACTN_rpt1"/>
    <property type="match status" value="1"/>
</dbReference>
<dbReference type="CDD" id="cd21216">
    <property type="entry name" value="CH_ACTN_rpt2"/>
    <property type="match status" value="1"/>
</dbReference>
<dbReference type="CDD" id="cd00051">
    <property type="entry name" value="EFh"/>
    <property type="match status" value="1"/>
</dbReference>
<dbReference type="CDD" id="cd00176">
    <property type="entry name" value="SPEC"/>
    <property type="match status" value="2"/>
</dbReference>
<dbReference type="FunFam" id="1.10.418.10:FF:000001">
    <property type="entry name" value="Actinin alpha 1"/>
    <property type="match status" value="1"/>
</dbReference>
<dbReference type="FunFam" id="1.10.418.10:FF:000036">
    <property type="entry name" value="Actinin alpha 1"/>
    <property type="match status" value="1"/>
</dbReference>
<dbReference type="FunFam" id="1.10.238.10:FF:000178">
    <property type="entry name" value="Calmodulin-2 A"/>
    <property type="match status" value="1"/>
</dbReference>
<dbReference type="Gene3D" id="1.20.58.60">
    <property type="match status" value="3"/>
</dbReference>
<dbReference type="Gene3D" id="1.10.418.10">
    <property type="entry name" value="Calponin-like domain"/>
    <property type="match status" value="2"/>
</dbReference>
<dbReference type="Gene3D" id="1.10.238.10">
    <property type="entry name" value="EF-hand"/>
    <property type="match status" value="2"/>
</dbReference>
<dbReference type="InterPro" id="IPR001589">
    <property type="entry name" value="Actinin_actin-bd_CS"/>
</dbReference>
<dbReference type="InterPro" id="IPR001715">
    <property type="entry name" value="CH_dom"/>
</dbReference>
<dbReference type="InterPro" id="IPR036872">
    <property type="entry name" value="CH_dom_sf"/>
</dbReference>
<dbReference type="InterPro" id="IPR011992">
    <property type="entry name" value="EF-hand-dom_pair"/>
</dbReference>
<dbReference type="InterPro" id="IPR014837">
    <property type="entry name" value="EF-hand_Ca_insen"/>
</dbReference>
<dbReference type="InterPro" id="IPR018247">
    <property type="entry name" value="EF_Hand_1_Ca_BS"/>
</dbReference>
<dbReference type="InterPro" id="IPR002048">
    <property type="entry name" value="EF_hand_dom"/>
</dbReference>
<dbReference type="InterPro" id="IPR018159">
    <property type="entry name" value="Spectrin/alpha-actinin"/>
</dbReference>
<dbReference type="InterPro" id="IPR002017">
    <property type="entry name" value="Spectrin_repeat"/>
</dbReference>
<dbReference type="PANTHER" id="PTHR11915">
    <property type="entry name" value="SPECTRIN/FILAMIN RELATED CYTOSKELETAL PROTEIN"/>
    <property type="match status" value="1"/>
</dbReference>
<dbReference type="Pfam" id="PF00307">
    <property type="entry name" value="CH"/>
    <property type="match status" value="2"/>
</dbReference>
<dbReference type="Pfam" id="PF13499">
    <property type="entry name" value="EF-hand_7"/>
    <property type="match status" value="1"/>
</dbReference>
<dbReference type="Pfam" id="PF08726">
    <property type="entry name" value="EFhand_Ca_insen"/>
    <property type="match status" value="1"/>
</dbReference>
<dbReference type="Pfam" id="PF00435">
    <property type="entry name" value="Spectrin"/>
    <property type="match status" value="3"/>
</dbReference>
<dbReference type="SMART" id="SM00033">
    <property type="entry name" value="CH"/>
    <property type="match status" value="2"/>
</dbReference>
<dbReference type="SMART" id="SM00054">
    <property type="entry name" value="EFh"/>
    <property type="match status" value="2"/>
</dbReference>
<dbReference type="SMART" id="SM01184">
    <property type="entry name" value="efhand_Ca_insen"/>
    <property type="match status" value="1"/>
</dbReference>
<dbReference type="SMART" id="SM00150">
    <property type="entry name" value="SPEC"/>
    <property type="match status" value="4"/>
</dbReference>
<dbReference type="SUPFAM" id="SSF47576">
    <property type="entry name" value="Calponin-homology domain, CH-domain"/>
    <property type="match status" value="1"/>
</dbReference>
<dbReference type="SUPFAM" id="SSF47473">
    <property type="entry name" value="EF-hand"/>
    <property type="match status" value="1"/>
</dbReference>
<dbReference type="SUPFAM" id="SSF46966">
    <property type="entry name" value="Spectrin repeat"/>
    <property type="match status" value="4"/>
</dbReference>
<dbReference type="PROSITE" id="PS00019">
    <property type="entry name" value="ACTININ_1"/>
    <property type="match status" value="1"/>
</dbReference>
<dbReference type="PROSITE" id="PS00020">
    <property type="entry name" value="ACTININ_2"/>
    <property type="match status" value="1"/>
</dbReference>
<dbReference type="PROSITE" id="PS50021">
    <property type="entry name" value="CH"/>
    <property type="match status" value="2"/>
</dbReference>
<dbReference type="PROSITE" id="PS00018">
    <property type="entry name" value="EF_HAND_1"/>
    <property type="match status" value="2"/>
</dbReference>
<dbReference type="PROSITE" id="PS50222">
    <property type="entry name" value="EF_HAND_2"/>
    <property type="match status" value="2"/>
</dbReference>
<protein>
    <recommendedName>
        <fullName>Alpha-actinin A</fullName>
    </recommendedName>
    <alternativeName>
        <fullName>Actin-binding protein A</fullName>
    </alternativeName>
    <alternativeName>
        <fullName>F-actin cross-linking protein</fullName>
    </alternativeName>
</protein>
<proteinExistence type="evidence at protein level"/>